<keyword id="KW-0028">Amino-acid biosynthesis</keyword>
<keyword id="KW-0963">Cytoplasm</keyword>
<keyword id="KW-0368">Histidine biosynthesis</keyword>
<keyword id="KW-0456">Lyase</keyword>
<reference key="1">
    <citation type="submission" date="2008-10" db="EMBL/GenBank/DDBJ databases">
        <title>Genome sequence of Bacillus cereus AH820.</title>
        <authorList>
            <person name="Dodson R.J."/>
            <person name="Durkin A.S."/>
            <person name="Rosovitz M.J."/>
            <person name="Rasko D.A."/>
            <person name="Hoffmaster A."/>
            <person name="Ravel J."/>
            <person name="Sutton G."/>
        </authorList>
    </citation>
    <scope>NUCLEOTIDE SEQUENCE [LARGE SCALE GENOMIC DNA]</scope>
    <source>
        <strain>AH820</strain>
    </source>
</reference>
<organism>
    <name type="scientific">Bacillus cereus (strain AH820)</name>
    <dbReference type="NCBI Taxonomy" id="405535"/>
    <lineage>
        <taxon>Bacteria</taxon>
        <taxon>Bacillati</taxon>
        <taxon>Bacillota</taxon>
        <taxon>Bacilli</taxon>
        <taxon>Bacillales</taxon>
        <taxon>Bacillaceae</taxon>
        <taxon>Bacillus</taxon>
        <taxon>Bacillus cereus group</taxon>
    </lineage>
</organism>
<protein>
    <recommendedName>
        <fullName evidence="1">Imidazoleglycerol-phosphate dehydratase</fullName>
        <shortName evidence="1">IGPD</shortName>
        <ecNumber evidence="1">4.2.1.19</ecNumber>
    </recommendedName>
</protein>
<dbReference type="EC" id="4.2.1.19" evidence="1"/>
<dbReference type="EMBL" id="CP001283">
    <property type="protein sequence ID" value="ACK90394.1"/>
    <property type="molecule type" value="Genomic_DNA"/>
</dbReference>
<dbReference type="RefSeq" id="WP_001209299.1">
    <property type="nucleotide sequence ID" value="NC_011773.1"/>
</dbReference>
<dbReference type="SMR" id="B7JFZ2"/>
<dbReference type="KEGG" id="bcu:BCAH820_1498"/>
<dbReference type="HOGENOM" id="CLU_044308_3_0_9"/>
<dbReference type="UniPathway" id="UPA00031">
    <property type="reaction ID" value="UER00011"/>
</dbReference>
<dbReference type="Proteomes" id="UP000001363">
    <property type="component" value="Chromosome"/>
</dbReference>
<dbReference type="GO" id="GO:0005737">
    <property type="term" value="C:cytoplasm"/>
    <property type="evidence" value="ECO:0007669"/>
    <property type="project" value="UniProtKB-SubCell"/>
</dbReference>
<dbReference type="GO" id="GO:0004424">
    <property type="term" value="F:imidazoleglycerol-phosphate dehydratase activity"/>
    <property type="evidence" value="ECO:0007669"/>
    <property type="project" value="UniProtKB-UniRule"/>
</dbReference>
<dbReference type="GO" id="GO:0000105">
    <property type="term" value="P:L-histidine biosynthetic process"/>
    <property type="evidence" value="ECO:0007669"/>
    <property type="project" value="UniProtKB-UniRule"/>
</dbReference>
<dbReference type="CDD" id="cd07914">
    <property type="entry name" value="IGPD"/>
    <property type="match status" value="1"/>
</dbReference>
<dbReference type="FunFam" id="3.30.230.40:FF:000001">
    <property type="entry name" value="Imidazoleglycerol-phosphate dehydratase HisB"/>
    <property type="match status" value="1"/>
</dbReference>
<dbReference type="FunFam" id="3.30.230.40:FF:000003">
    <property type="entry name" value="Imidazoleglycerol-phosphate dehydratase HisB"/>
    <property type="match status" value="1"/>
</dbReference>
<dbReference type="Gene3D" id="3.30.230.40">
    <property type="entry name" value="Imidazole glycerol phosphate dehydratase, domain 1"/>
    <property type="match status" value="2"/>
</dbReference>
<dbReference type="HAMAP" id="MF_00076">
    <property type="entry name" value="HisB"/>
    <property type="match status" value="1"/>
</dbReference>
<dbReference type="InterPro" id="IPR038494">
    <property type="entry name" value="IGPD_sf"/>
</dbReference>
<dbReference type="InterPro" id="IPR000807">
    <property type="entry name" value="ImidazoleglycerolP_deHydtase"/>
</dbReference>
<dbReference type="InterPro" id="IPR020565">
    <property type="entry name" value="ImidazoleglycerP_deHydtase_CS"/>
</dbReference>
<dbReference type="InterPro" id="IPR020568">
    <property type="entry name" value="Ribosomal_Su5_D2-typ_SF"/>
</dbReference>
<dbReference type="NCBIfam" id="NF002107">
    <property type="entry name" value="PRK00951.1-2"/>
    <property type="match status" value="1"/>
</dbReference>
<dbReference type="NCBIfam" id="NF002111">
    <property type="entry name" value="PRK00951.2-1"/>
    <property type="match status" value="1"/>
</dbReference>
<dbReference type="NCBIfam" id="NF002114">
    <property type="entry name" value="PRK00951.2-4"/>
    <property type="match status" value="1"/>
</dbReference>
<dbReference type="PANTHER" id="PTHR23133:SF2">
    <property type="entry name" value="IMIDAZOLEGLYCEROL-PHOSPHATE DEHYDRATASE"/>
    <property type="match status" value="1"/>
</dbReference>
<dbReference type="PANTHER" id="PTHR23133">
    <property type="entry name" value="IMIDAZOLEGLYCEROL-PHOSPHATE DEHYDRATASE HIS7"/>
    <property type="match status" value="1"/>
</dbReference>
<dbReference type="Pfam" id="PF00475">
    <property type="entry name" value="IGPD"/>
    <property type="match status" value="1"/>
</dbReference>
<dbReference type="SUPFAM" id="SSF54211">
    <property type="entry name" value="Ribosomal protein S5 domain 2-like"/>
    <property type="match status" value="2"/>
</dbReference>
<dbReference type="PROSITE" id="PS00954">
    <property type="entry name" value="IGP_DEHYDRATASE_1"/>
    <property type="match status" value="1"/>
</dbReference>
<dbReference type="PROSITE" id="PS00955">
    <property type="entry name" value="IGP_DEHYDRATASE_2"/>
    <property type="match status" value="1"/>
</dbReference>
<name>HIS7_BACC0</name>
<proteinExistence type="inferred from homology"/>
<sequence>MRESSQIRETTETKIKLSLQLDEGKNVSVQTGVGFFDHMLTLFARHGRFGLQVEAEGDVFVDAHHTVEDVGIVLGNCLKKALQNKEGINRYGSAYVPMDESLGFVAIDISGRSYIVFQGELTNPKLGDFDTELTEEFFRAVAHTANITLHARILYGSNTHHKIEALFKAFGRALREAVERNAHITGVNSTKGML</sequence>
<feature type="chain" id="PRO_1000117077" description="Imidazoleglycerol-phosphate dehydratase">
    <location>
        <begin position="1"/>
        <end position="194"/>
    </location>
</feature>
<gene>
    <name evidence="1" type="primary">hisB</name>
    <name type="ordered locus">BCAH820_1498</name>
</gene>
<evidence type="ECO:0000255" key="1">
    <source>
        <dbReference type="HAMAP-Rule" id="MF_00076"/>
    </source>
</evidence>
<accession>B7JFZ2</accession>
<comment type="catalytic activity">
    <reaction evidence="1">
        <text>D-erythro-1-(imidazol-4-yl)glycerol 3-phosphate = 3-(imidazol-4-yl)-2-oxopropyl phosphate + H2O</text>
        <dbReference type="Rhea" id="RHEA:11040"/>
        <dbReference type="ChEBI" id="CHEBI:15377"/>
        <dbReference type="ChEBI" id="CHEBI:57766"/>
        <dbReference type="ChEBI" id="CHEBI:58278"/>
        <dbReference type="EC" id="4.2.1.19"/>
    </reaction>
</comment>
<comment type="pathway">
    <text evidence="1">Amino-acid biosynthesis; L-histidine biosynthesis; L-histidine from 5-phospho-alpha-D-ribose 1-diphosphate: step 6/9.</text>
</comment>
<comment type="subcellular location">
    <subcellularLocation>
        <location evidence="1">Cytoplasm</location>
    </subcellularLocation>
</comment>
<comment type="similarity">
    <text evidence="1">Belongs to the imidazoleglycerol-phosphate dehydratase family.</text>
</comment>